<geneLocation type="chloroplast"/>
<proteinExistence type="inferred from homology"/>
<reference key="1">
    <citation type="journal article" date="2006" name="BMC Evol. Biol.">
        <title>Complete plastid genome sequences of Drimys, Liriodendron, and Piper: implications for the phylogenetic relationships of magnoliids.</title>
        <authorList>
            <person name="Cai Z."/>
            <person name="Penaflor C."/>
            <person name="Kuehl J.V."/>
            <person name="Leebens-Mack J."/>
            <person name="Carlson J.E."/>
            <person name="dePamphilis C.W."/>
            <person name="Boore J.L."/>
            <person name="Jansen R.K."/>
        </authorList>
    </citation>
    <scope>NUCLEOTIDE SEQUENCE [LARGE SCALE GENOMIC DNA]</scope>
</reference>
<name>RBL_DRIGR</name>
<protein>
    <recommendedName>
        <fullName evidence="1">Ribulose bisphosphate carboxylase large chain</fullName>
        <shortName evidence="1">RuBisCO large subunit</shortName>
        <ecNumber evidence="1">4.1.1.39</ecNumber>
    </recommendedName>
</protein>
<gene>
    <name evidence="1" type="primary">rbcL</name>
</gene>
<sequence>MSPKTETKASVGFKAGVKDYKLTYYTPDYETKDTDILAAFRVTPQPGVPPEEAGAAVAAESSTGTWTTVWTDGLTSLDRYKGRCYHIEPVAGEEDQYIAYVAYPLDLFEEGSVTNMFTSIVGNVFGFKALRALRLEDLRIPTAYVKTFQGPPHGIQVERDKLNKYGRPLLGCTIKPKLGLSAKNYGRAVYECLRGGLDFTKDDENVNSQPFMRWRDRFLFCAEALYKAQAETGEIKGHYLNATAGTCEEMMKRAVFARELGVPIVMHDYLTGGFTANTTLAHYCRDNGLLLHIHRAMHAVIDRQKNHGIHFRVLAKALRMSGGDHIHAGTVVGKLEGERDITLGFVDLLRDDFIQKDRSRGIYFTQDWVSMPGVLPVASGGIHVWHMPALTEIFGDDSVLQFGGGTLGHPWGNAPGAVANRVALEACVQARNEGRDLAREGNEIIREACKWSPELAAACEVWKEIKFEFKAVDTLDIL</sequence>
<feature type="propeptide" id="PRO_0000275359" evidence="1">
    <location>
        <begin position="1"/>
        <end position="2"/>
    </location>
</feature>
<feature type="chain" id="PRO_0000275360" description="Ribulose bisphosphate carboxylase large chain">
    <location>
        <begin position="3"/>
        <end position="478"/>
    </location>
</feature>
<feature type="active site" description="Proton acceptor" evidence="1">
    <location>
        <position position="175"/>
    </location>
</feature>
<feature type="active site" description="Proton acceptor" evidence="1">
    <location>
        <position position="294"/>
    </location>
</feature>
<feature type="binding site" description="in homodimeric partner" evidence="1">
    <location>
        <position position="123"/>
    </location>
    <ligand>
        <name>substrate</name>
    </ligand>
</feature>
<feature type="binding site" evidence="1">
    <location>
        <position position="173"/>
    </location>
    <ligand>
        <name>substrate</name>
    </ligand>
</feature>
<feature type="binding site" evidence="1">
    <location>
        <position position="177"/>
    </location>
    <ligand>
        <name>substrate</name>
    </ligand>
</feature>
<feature type="binding site" description="via carbamate group" evidence="1">
    <location>
        <position position="201"/>
    </location>
    <ligand>
        <name>Mg(2+)</name>
        <dbReference type="ChEBI" id="CHEBI:18420"/>
    </ligand>
</feature>
<feature type="binding site" evidence="1">
    <location>
        <position position="203"/>
    </location>
    <ligand>
        <name>Mg(2+)</name>
        <dbReference type="ChEBI" id="CHEBI:18420"/>
    </ligand>
</feature>
<feature type="binding site" evidence="1">
    <location>
        <position position="204"/>
    </location>
    <ligand>
        <name>Mg(2+)</name>
        <dbReference type="ChEBI" id="CHEBI:18420"/>
    </ligand>
</feature>
<feature type="binding site" evidence="1">
    <location>
        <position position="295"/>
    </location>
    <ligand>
        <name>substrate</name>
    </ligand>
</feature>
<feature type="binding site" evidence="1">
    <location>
        <position position="327"/>
    </location>
    <ligand>
        <name>substrate</name>
    </ligand>
</feature>
<feature type="binding site" evidence="1">
    <location>
        <position position="379"/>
    </location>
    <ligand>
        <name>substrate</name>
    </ligand>
</feature>
<feature type="site" description="Transition state stabilizer" evidence="1">
    <location>
        <position position="334"/>
    </location>
</feature>
<feature type="modified residue" description="N-acetylproline" evidence="1">
    <location>
        <position position="3"/>
    </location>
</feature>
<feature type="modified residue" description="N6,N6,N6-trimethyllysine" evidence="1">
    <location>
        <position position="14"/>
    </location>
</feature>
<feature type="modified residue" description="N6-carboxylysine" evidence="1">
    <location>
        <position position="201"/>
    </location>
</feature>
<feature type="disulfide bond" description="Interchain; in linked form" evidence="1">
    <location>
        <position position="247"/>
    </location>
</feature>
<organism>
    <name type="scientific">Drimys granadensis</name>
    <dbReference type="NCBI Taxonomy" id="224735"/>
    <lineage>
        <taxon>Eukaryota</taxon>
        <taxon>Viridiplantae</taxon>
        <taxon>Streptophyta</taxon>
        <taxon>Embryophyta</taxon>
        <taxon>Tracheophyta</taxon>
        <taxon>Spermatophyta</taxon>
        <taxon>Magnoliopsida</taxon>
        <taxon>Magnoliidae</taxon>
        <taxon>Canellales</taxon>
        <taxon>Winteraceae</taxon>
        <taxon>Drimys</taxon>
    </lineage>
</organism>
<keyword id="KW-0007">Acetylation</keyword>
<keyword id="KW-0113">Calvin cycle</keyword>
<keyword id="KW-0120">Carbon dioxide fixation</keyword>
<keyword id="KW-0150">Chloroplast</keyword>
<keyword id="KW-1015">Disulfide bond</keyword>
<keyword id="KW-0456">Lyase</keyword>
<keyword id="KW-0460">Magnesium</keyword>
<keyword id="KW-0479">Metal-binding</keyword>
<keyword id="KW-0488">Methylation</keyword>
<keyword id="KW-0503">Monooxygenase</keyword>
<keyword id="KW-0560">Oxidoreductase</keyword>
<keyword id="KW-0601">Photorespiration</keyword>
<keyword id="KW-0602">Photosynthesis</keyword>
<keyword id="KW-0934">Plastid</keyword>
<accession>Q06GY9</accession>
<dbReference type="EC" id="4.1.1.39" evidence="1"/>
<dbReference type="EMBL" id="DQ887676">
    <property type="protein sequence ID" value="ABH88305.1"/>
    <property type="molecule type" value="Genomic_DNA"/>
</dbReference>
<dbReference type="RefSeq" id="YP_784394.1">
    <property type="nucleotide sequence ID" value="NC_008456.1"/>
</dbReference>
<dbReference type="SMR" id="Q06GY9"/>
<dbReference type="GeneID" id="4363570"/>
<dbReference type="GO" id="GO:0009507">
    <property type="term" value="C:chloroplast"/>
    <property type="evidence" value="ECO:0007669"/>
    <property type="project" value="UniProtKB-SubCell"/>
</dbReference>
<dbReference type="GO" id="GO:0000287">
    <property type="term" value="F:magnesium ion binding"/>
    <property type="evidence" value="ECO:0007669"/>
    <property type="project" value="UniProtKB-UniRule"/>
</dbReference>
<dbReference type="GO" id="GO:0004497">
    <property type="term" value="F:monooxygenase activity"/>
    <property type="evidence" value="ECO:0007669"/>
    <property type="project" value="UniProtKB-KW"/>
</dbReference>
<dbReference type="GO" id="GO:0016984">
    <property type="term" value="F:ribulose-bisphosphate carboxylase activity"/>
    <property type="evidence" value="ECO:0007669"/>
    <property type="project" value="UniProtKB-UniRule"/>
</dbReference>
<dbReference type="GO" id="GO:0009853">
    <property type="term" value="P:photorespiration"/>
    <property type="evidence" value="ECO:0007669"/>
    <property type="project" value="UniProtKB-KW"/>
</dbReference>
<dbReference type="GO" id="GO:0019253">
    <property type="term" value="P:reductive pentose-phosphate cycle"/>
    <property type="evidence" value="ECO:0007669"/>
    <property type="project" value="UniProtKB-UniRule"/>
</dbReference>
<dbReference type="CDD" id="cd08212">
    <property type="entry name" value="RuBisCO_large_I"/>
    <property type="match status" value="1"/>
</dbReference>
<dbReference type="FunFam" id="3.20.20.110:FF:000001">
    <property type="entry name" value="Ribulose bisphosphate carboxylase large chain"/>
    <property type="match status" value="1"/>
</dbReference>
<dbReference type="FunFam" id="3.30.70.150:FF:000001">
    <property type="entry name" value="Ribulose bisphosphate carboxylase large chain"/>
    <property type="match status" value="1"/>
</dbReference>
<dbReference type="Gene3D" id="3.20.20.110">
    <property type="entry name" value="Ribulose bisphosphate carboxylase, large subunit, C-terminal domain"/>
    <property type="match status" value="1"/>
</dbReference>
<dbReference type="Gene3D" id="3.30.70.150">
    <property type="entry name" value="RuBisCO large subunit, N-terminal domain"/>
    <property type="match status" value="1"/>
</dbReference>
<dbReference type="HAMAP" id="MF_01338">
    <property type="entry name" value="RuBisCO_L_type1"/>
    <property type="match status" value="1"/>
</dbReference>
<dbReference type="InterPro" id="IPR033966">
    <property type="entry name" value="RuBisCO"/>
</dbReference>
<dbReference type="InterPro" id="IPR020878">
    <property type="entry name" value="RuBisCo_large_chain_AS"/>
</dbReference>
<dbReference type="InterPro" id="IPR000685">
    <property type="entry name" value="RuBisCO_lsu_C"/>
</dbReference>
<dbReference type="InterPro" id="IPR036376">
    <property type="entry name" value="RuBisCO_lsu_C_sf"/>
</dbReference>
<dbReference type="InterPro" id="IPR017443">
    <property type="entry name" value="RuBisCO_lsu_fd_N"/>
</dbReference>
<dbReference type="InterPro" id="IPR036422">
    <property type="entry name" value="RuBisCO_lsu_N_sf"/>
</dbReference>
<dbReference type="InterPro" id="IPR020888">
    <property type="entry name" value="RuBisCO_lsuI"/>
</dbReference>
<dbReference type="NCBIfam" id="NF003252">
    <property type="entry name" value="PRK04208.1"/>
    <property type="match status" value="1"/>
</dbReference>
<dbReference type="PANTHER" id="PTHR42704">
    <property type="entry name" value="RIBULOSE BISPHOSPHATE CARBOXYLASE"/>
    <property type="match status" value="1"/>
</dbReference>
<dbReference type="PANTHER" id="PTHR42704:SF15">
    <property type="entry name" value="RIBULOSE BISPHOSPHATE CARBOXYLASE LARGE CHAIN"/>
    <property type="match status" value="1"/>
</dbReference>
<dbReference type="Pfam" id="PF00016">
    <property type="entry name" value="RuBisCO_large"/>
    <property type="match status" value="1"/>
</dbReference>
<dbReference type="Pfam" id="PF02788">
    <property type="entry name" value="RuBisCO_large_N"/>
    <property type="match status" value="1"/>
</dbReference>
<dbReference type="SFLD" id="SFLDG01052">
    <property type="entry name" value="RuBisCO"/>
    <property type="match status" value="1"/>
</dbReference>
<dbReference type="SFLD" id="SFLDS00014">
    <property type="entry name" value="RuBisCO"/>
    <property type="match status" value="1"/>
</dbReference>
<dbReference type="SFLD" id="SFLDG00301">
    <property type="entry name" value="RuBisCO-like_proteins"/>
    <property type="match status" value="1"/>
</dbReference>
<dbReference type="SUPFAM" id="SSF51649">
    <property type="entry name" value="RuBisCo, C-terminal domain"/>
    <property type="match status" value="1"/>
</dbReference>
<dbReference type="SUPFAM" id="SSF54966">
    <property type="entry name" value="RuBisCO, large subunit, small (N-terminal) domain"/>
    <property type="match status" value="1"/>
</dbReference>
<dbReference type="PROSITE" id="PS00157">
    <property type="entry name" value="RUBISCO_LARGE"/>
    <property type="match status" value="1"/>
</dbReference>
<comment type="function">
    <text evidence="1">RuBisCO catalyzes two reactions: the carboxylation of D-ribulose 1,5-bisphosphate, the primary event in carbon dioxide fixation, as well as the oxidative fragmentation of the pentose substrate in the photorespiration process. Both reactions occur simultaneously and in competition at the same active site.</text>
</comment>
<comment type="catalytic activity">
    <reaction evidence="1">
        <text>2 (2R)-3-phosphoglycerate + 2 H(+) = D-ribulose 1,5-bisphosphate + CO2 + H2O</text>
        <dbReference type="Rhea" id="RHEA:23124"/>
        <dbReference type="ChEBI" id="CHEBI:15377"/>
        <dbReference type="ChEBI" id="CHEBI:15378"/>
        <dbReference type="ChEBI" id="CHEBI:16526"/>
        <dbReference type="ChEBI" id="CHEBI:57870"/>
        <dbReference type="ChEBI" id="CHEBI:58272"/>
        <dbReference type="EC" id="4.1.1.39"/>
    </reaction>
</comment>
<comment type="catalytic activity">
    <reaction evidence="1">
        <text>D-ribulose 1,5-bisphosphate + O2 = 2-phosphoglycolate + (2R)-3-phosphoglycerate + 2 H(+)</text>
        <dbReference type="Rhea" id="RHEA:36631"/>
        <dbReference type="ChEBI" id="CHEBI:15378"/>
        <dbReference type="ChEBI" id="CHEBI:15379"/>
        <dbReference type="ChEBI" id="CHEBI:57870"/>
        <dbReference type="ChEBI" id="CHEBI:58033"/>
        <dbReference type="ChEBI" id="CHEBI:58272"/>
    </reaction>
</comment>
<comment type="cofactor">
    <cofactor evidence="1">
        <name>Mg(2+)</name>
        <dbReference type="ChEBI" id="CHEBI:18420"/>
    </cofactor>
    <text evidence="1">Binds 1 Mg(2+) ion per subunit.</text>
</comment>
<comment type="subunit">
    <text evidence="1">Heterohexadecamer of 8 large chains and 8 small chains; disulfide-linked. The disulfide link is formed within the large subunit homodimers.</text>
</comment>
<comment type="subcellular location">
    <subcellularLocation>
        <location>Plastid</location>
        <location>Chloroplast</location>
    </subcellularLocation>
</comment>
<comment type="PTM">
    <text evidence="1">The disulfide bond which can form in the large chain dimeric partners within the hexadecamer appears to be associated with oxidative stress and protein turnover.</text>
</comment>
<comment type="miscellaneous">
    <text evidence="1">The basic functional RuBisCO is composed of a large chain homodimer in a 'head-to-tail' conformation. In form I RuBisCO this homodimer is arranged in a barrel-like tetramer with the small subunits forming a tetrameric 'cap' on each end of the 'barrel'.</text>
</comment>
<comment type="similarity">
    <text evidence="1">Belongs to the RuBisCO large chain family. Type I subfamily.</text>
</comment>
<evidence type="ECO:0000255" key="1">
    <source>
        <dbReference type="HAMAP-Rule" id="MF_01338"/>
    </source>
</evidence>